<reference evidence="4" key="1">
    <citation type="journal article" date="2003" name="J. Biochem.">
        <title>Crystal structure of Enterococcus hirae enolase at 2.8 A resolution.</title>
        <authorList>
            <person name="Hosaka T."/>
            <person name="Meguro T."/>
            <person name="Yamato I."/>
            <person name="Shirakihara Y."/>
        </authorList>
    </citation>
    <scope>NUCLEOTIDE SEQUENCE [GENOMIC DNA]</scope>
    <scope>PROTEIN SEQUENCE OF 1-22</scope>
    <scope>X-RAY CRYSTALLOGRAPHY (2.8 ANGSTROMS) IN COMPLEX WITH MG(2+)</scope>
    <scope>FUNCTION</scope>
    <scope>CATALYTIC ACTIVITY</scope>
    <scope>COFACTOR</scope>
    <scope>SUBUNIT</scope>
    <source>
        <strain>ATCC 9790</strain>
    </source>
</reference>
<evidence type="ECO:0000255" key="1">
    <source>
        <dbReference type="HAMAP-Rule" id="MF_00318"/>
    </source>
</evidence>
<evidence type="ECO:0000269" key="2">
    <source>
    </source>
</evidence>
<evidence type="ECO:0000305" key="3">
    <source>
    </source>
</evidence>
<evidence type="ECO:0007744" key="4">
    <source>
        <dbReference type="PDB" id="1IYX"/>
    </source>
</evidence>
<evidence type="ECO:0007829" key="5">
    <source>
        <dbReference type="PDB" id="1IYX"/>
    </source>
</evidence>
<organism>
    <name type="scientific">Enterococcus hirae</name>
    <dbReference type="NCBI Taxonomy" id="1354"/>
    <lineage>
        <taxon>Bacteria</taxon>
        <taxon>Bacillati</taxon>
        <taxon>Bacillota</taxon>
        <taxon>Bacilli</taxon>
        <taxon>Lactobacillales</taxon>
        <taxon>Enterococcaceae</taxon>
        <taxon>Enterococcus</taxon>
    </lineage>
</organism>
<proteinExistence type="evidence at protein level"/>
<dbReference type="EC" id="4.2.1.11" evidence="1 2"/>
<dbReference type="EMBL" id="AB091345">
    <property type="protein sequence ID" value="BAC16223.1"/>
    <property type="molecule type" value="Genomic_DNA"/>
</dbReference>
<dbReference type="PDB" id="1IYX">
    <property type="method" value="X-ray"/>
    <property type="resolution" value="2.80 A"/>
    <property type="chains" value="A/B=1-432"/>
</dbReference>
<dbReference type="PDBsum" id="1IYX"/>
<dbReference type="SMR" id="Q8GR70"/>
<dbReference type="STRING" id="1354.A6P53_09325"/>
<dbReference type="BRENDA" id="4.2.1.11">
    <property type="organism ID" value="2097"/>
</dbReference>
<dbReference type="UniPathway" id="UPA00109">
    <property type="reaction ID" value="UER00187"/>
</dbReference>
<dbReference type="EvolutionaryTrace" id="Q8GR70"/>
<dbReference type="GO" id="GO:0009986">
    <property type="term" value="C:cell surface"/>
    <property type="evidence" value="ECO:0007669"/>
    <property type="project" value="UniProtKB-SubCell"/>
</dbReference>
<dbReference type="GO" id="GO:0005576">
    <property type="term" value="C:extracellular region"/>
    <property type="evidence" value="ECO:0007669"/>
    <property type="project" value="UniProtKB-SubCell"/>
</dbReference>
<dbReference type="GO" id="GO:0000015">
    <property type="term" value="C:phosphopyruvate hydratase complex"/>
    <property type="evidence" value="ECO:0007669"/>
    <property type="project" value="InterPro"/>
</dbReference>
<dbReference type="GO" id="GO:0000287">
    <property type="term" value="F:magnesium ion binding"/>
    <property type="evidence" value="ECO:0007669"/>
    <property type="project" value="UniProtKB-UniRule"/>
</dbReference>
<dbReference type="GO" id="GO:0004634">
    <property type="term" value="F:phosphopyruvate hydratase activity"/>
    <property type="evidence" value="ECO:0007669"/>
    <property type="project" value="UniProtKB-UniRule"/>
</dbReference>
<dbReference type="GO" id="GO:0006096">
    <property type="term" value="P:glycolytic process"/>
    <property type="evidence" value="ECO:0007669"/>
    <property type="project" value="UniProtKB-UniRule"/>
</dbReference>
<dbReference type="CDD" id="cd03313">
    <property type="entry name" value="enolase"/>
    <property type="match status" value="1"/>
</dbReference>
<dbReference type="FunFam" id="3.20.20.120:FF:000001">
    <property type="entry name" value="Enolase"/>
    <property type="match status" value="1"/>
</dbReference>
<dbReference type="FunFam" id="3.30.390.10:FF:000001">
    <property type="entry name" value="Enolase"/>
    <property type="match status" value="1"/>
</dbReference>
<dbReference type="Gene3D" id="3.20.20.120">
    <property type="entry name" value="Enolase-like C-terminal domain"/>
    <property type="match status" value="1"/>
</dbReference>
<dbReference type="Gene3D" id="3.30.390.10">
    <property type="entry name" value="Enolase-like, N-terminal domain"/>
    <property type="match status" value="1"/>
</dbReference>
<dbReference type="HAMAP" id="MF_00318">
    <property type="entry name" value="Enolase"/>
    <property type="match status" value="1"/>
</dbReference>
<dbReference type="InterPro" id="IPR000941">
    <property type="entry name" value="Enolase"/>
</dbReference>
<dbReference type="InterPro" id="IPR036849">
    <property type="entry name" value="Enolase-like_C_sf"/>
</dbReference>
<dbReference type="InterPro" id="IPR029017">
    <property type="entry name" value="Enolase-like_N"/>
</dbReference>
<dbReference type="InterPro" id="IPR020810">
    <property type="entry name" value="Enolase_C"/>
</dbReference>
<dbReference type="InterPro" id="IPR020809">
    <property type="entry name" value="Enolase_CS"/>
</dbReference>
<dbReference type="InterPro" id="IPR020811">
    <property type="entry name" value="Enolase_N"/>
</dbReference>
<dbReference type="NCBIfam" id="TIGR01060">
    <property type="entry name" value="eno"/>
    <property type="match status" value="1"/>
</dbReference>
<dbReference type="PANTHER" id="PTHR11902">
    <property type="entry name" value="ENOLASE"/>
    <property type="match status" value="1"/>
</dbReference>
<dbReference type="PANTHER" id="PTHR11902:SF1">
    <property type="entry name" value="ENOLASE"/>
    <property type="match status" value="1"/>
</dbReference>
<dbReference type="Pfam" id="PF00113">
    <property type="entry name" value="Enolase_C"/>
    <property type="match status" value="1"/>
</dbReference>
<dbReference type="Pfam" id="PF03952">
    <property type="entry name" value="Enolase_N"/>
    <property type="match status" value="1"/>
</dbReference>
<dbReference type="PIRSF" id="PIRSF001400">
    <property type="entry name" value="Enolase"/>
    <property type="match status" value="1"/>
</dbReference>
<dbReference type="PRINTS" id="PR00148">
    <property type="entry name" value="ENOLASE"/>
</dbReference>
<dbReference type="SFLD" id="SFLDS00001">
    <property type="entry name" value="Enolase"/>
    <property type="match status" value="1"/>
</dbReference>
<dbReference type="SFLD" id="SFLDF00002">
    <property type="entry name" value="enolase"/>
    <property type="match status" value="1"/>
</dbReference>
<dbReference type="SMART" id="SM01192">
    <property type="entry name" value="Enolase_C"/>
    <property type="match status" value="1"/>
</dbReference>
<dbReference type="SMART" id="SM01193">
    <property type="entry name" value="Enolase_N"/>
    <property type="match status" value="1"/>
</dbReference>
<dbReference type="SUPFAM" id="SSF51604">
    <property type="entry name" value="Enolase C-terminal domain-like"/>
    <property type="match status" value="1"/>
</dbReference>
<dbReference type="SUPFAM" id="SSF54826">
    <property type="entry name" value="Enolase N-terminal domain-like"/>
    <property type="match status" value="1"/>
</dbReference>
<dbReference type="PROSITE" id="PS00164">
    <property type="entry name" value="ENOLASE"/>
    <property type="match status" value="1"/>
</dbReference>
<comment type="function">
    <text evidence="1">Catalyzes the reversible conversion of 2-phosphoglycerate (2-PG) into phosphoenolpyruvate (PEP). It is essential for the degradation of carbohydrates via glycolysis.</text>
</comment>
<comment type="catalytic activity">
    <reaction evidence="1 2">
        <text>(2R)-2-phosphoglycerate = phosphoenolpyruvate + H2O</text>
        <dbReference type="Rhea" id="RHEA:10164"/>
        <dbReference type="ChEBI" id="CHEBI:15377"/>
        <dbReference type="ChEBI" id="CHEBI:58289"/>
        <dbReference type="ChEBI" id="CHEBI:58702"/>
        <dbReference type="EC" id="4.2.1.11"/>
    </reaction>
    <physiologicalReaction direction="left-to-right" evidence="2">
        <dbReference type="Rhea" id="RHEA:10165"/>
    </physiologicalReaction>
</comment>
<comment type="cofactor">
    <cofactor evidence="1 2">
        <name>Mg(2+)</name>
        <dbReference type="ChEBI" id="CHEBI:18420"/>
    </cofactor>
    <text evidence="1 3">Binds a second Mg(2+) ion via substrate during catalysis.</text>
</comment>
<comment type="activity regulation">
    <text evidence="1">The covalent binding to the substrate causes inactivation of the enzyme, and possibly serves as a signal for the export of the protein.</text>
</comment>
<comment type="pathway">
    <text evidence="1">Carbohydrate degradation; glycolysis; pyruvate from D-glyceraldehyde 3-phosphate: step 4/5.</text>
</comment>
<comment type="subunit">
    <text evidence="2">Homodimer.</text>
</comment>
<comment type="subcellular location">
    <subcellularLocation>
        <location evidence="1">Cytoplasm</location>
    </subcellularLocation>
    <subcellularLocation>
        <location evidence="1">Secreted</location>
    </subcellularLocation>
    <subcellularLocation>
        <location evidence="1">Cell surface</location>
    </subcellularLocation>
    <text evidence="1">Fractions of enolase are present in both the cytoplasm and on the cell surface.</text>
</comment>
<comment type="similarity">
    <text evidence="1">Belongs to the enolase family.</text>
</comment>
<accession>Q8GR70</accession>
<name>ENO_ENTHR</name>
<gene>
    <name evidence="1" type="primary">eno</name>
</gene>
<keyword id="KW-0002">3D-structure</keyword>
<keyword id="KW-0963">Cytoplasm</keyword>
<keyword id="KW-0903">Direct protein sequencing</keyword>
<keyword id="KW-0324">Glycolysis</keyword>
<keyword id="KW-0456">Lyase</keyword>
<keyword id="KW-0460">Magnesium</keyword>
<keyword id="KW-0479">Metal-binding</keyword>
<keyword id="KW-0964">Secreted</keyword>
<protein>
    <recommendedName>
        <fullName evidence="1">Enolase</fullName>
        <ecNumber evidence="1 2">4.2.1.11</ecNumber>
    </recommendedName>
    <alternativeName>
        <fullName evidence="1">2-phospho-D-glycerate hydro-lyase</fullName>
    </alternativeName>
    <alternativeName>
        <fullName evidence="1">2-phosphoglycerate dehydratase</fullName>
    </alternativeName>
</protein>
<sequence length="432" mass="46411">MSIITDVYAREILDSRGNPTIEVEVYTESGAFGRGMVPSGASTGEYEAVELRDGDKARYGGKGVTKAVDNVNNIIAEAIIGYDVRDQMAIDKAMIALDGTPNKGKLGANAILGVSIAVARAAADYLEVPLYHYLGGFNTKVLPTPMMNIINGGSHADNSIDFQEFMIMPVGAPTFKEALRMGAEVFHALAAILKSRGLATSVGDEGGFAPNLGSNEEGFEVIIEAIEKAGYVPGKDVVLAMDAASSEFYDKEKGVYVLADSGEGEKTTDEMIKFYEELVSKYPIISIEDGLDENDWDGFKKLTDVLGDKVQLVGDDLFVTNTQKLSEGIEKGIANSILIKVNQIGTLTETFEAIEMAKEAGYTAVVSHRSGETEDSTISDIAVATNAGQIKTGSLSRTDRIAKYNQLLRIEDQLGEVAEYKGLKSFYNLKAA</sequence>
<feature type="chain" id="PRO_0000133886" description="Enolase">
    <location>
        <begin position="1"/>
        <end position="432"/>
    </location>
</feature>
<feature type="active site" description="Proton donor" evidence="1">
    <location>
        <position position="205"/>
    </location>
</feature>
<feature type="active site" description="Proton acceptor" evidence="1">
    <location>
        <position position="340"/>
    </location>
</feature>
<feature type="binding site" evidence="1">
    <location>
        <position position="163"/>
    </location>
    <ligand>
        <name>(2R)-2-phosphoglycerate</name>
        <dbReference type="ChEBI" id="CHEBI:58289"/>
    </ligand>
</feature>
<feature type="binding site" evidence="1 4">
    <location>
        <position position="242"/>
    </location>
    <ligand>
        <name>Mg(2+)</name>
        <dbReference type="ChEBI" id="CHEBI:18420"/>
    </ligand>
</feature>
<feature type="binding site" evidence="1 4">
    <location>
        <position position="288"/>
    </location>
    <ligand>
        <name>Mg(2+)</name>
        <dbReference type="ChEBI" id="CHEBI:18420"/>
    </ligand>
</feature>
<feature type="binding site" evidence="1 4">
    <location>
        <position position="315"/>
    </location>
    <ligand>
        <name>Mg(2+)</name>
        <dbReference type="ChEBI" id="CHEBI:18420"/>
    </ligand>
</feature>
<feature type="binding site" evidence="1">
    <location>
        <position position="340"/>
    </location>
    <ligand>
        <name>(2R)-2-phosphoglycerate</name>
        <dbReference type="ChEBI" id="CHEBI:58289"/>
    </ligand>
</feature>
<feature type="binding site" evidence="1">
    <location>
        <position position="369"/>
    </location>
    <ligand>
        <name>(2R)-2-phosphoglycerate</name>
        <dbReference type="ChEBI" id="CHEBI:58289"/>
    </ligand>
</feature>
<feature type="binding site" evidence="1">
    <location>
        <position position="370"/>
    </location>
    <ligand>
        <name>(2R)-2-phosphoglycerate</name>
        <dbReference type="ChEBI" id="CHEBI:58289"/>
    </ligand>
</feature>
<feature type="binding site" evidence="1">
    <location>
        <position position="391"/>
    </location>
    <ligand>
        <name>(2R)-2-phosphoglycerate</name>
        <dbReference type="ChEBI" id="CHEBI:58289"/>
    </ligand>
</feature>
<feature type="strand" evidence="5">
    <location>
        <begin position="3"/>
        <end position="13"/>
    </location>
</feature>
<feature type="strand" evidence="5">
    <location>
        <begin position="19"/>
        <end position="27"/>
    </location>
</feature>
<feature type="strand" evidence="5">
    <location>
        <begin position="32"/>
        <end position="36"/>
    </location>
</feature>
<feature type="strand" evidence="5">
    <location>
        <begin position="45"/>
        <end position="47"/>
    </location>
</feature>
<feature type="helix" evidence="5">
    <location>
        <begin position="59"/>
        <end position="61"/>
    </location>
</feature>
<feature type="helix" evidence="5">
    <location>
        <begin position="65"/>
        <end position="73"/>
    </location>
</feature>
<feature type="helix" evidence="5">
    <location>
        <begin position="75"/>
        <end position="79"/>
    </location>
</feature>
<feature type="helix" evidence="5">
    <location>
        <begin position="87"/>
        <end position="98"/>
    </location>
</feature>
<feature type="turn" evidence="5">
    <location>
        <begin position="104"/>
        <end position="106"/>
    </location>
</feature>
<feature type="helix" evidence="5">
    <location>
        <begin position="108"/>
        <end position="126"/>
    </location>
</feature>
<feature type="helix" evidence="5">
    <location>
        <begin position="130"/>
        <end position="135"/>
    </location>
</feature>
<feature type="strand" evidence="5">
    <location>
        <begin position="147"/>
        <end position="151"/>
    </location>
</feature>
<feature type="helix" evidence="5">
    <location>
        <begin position="153"/>
        <end position="155"/>
    </location>
</feature>
<feature type="strand" evidence="5">
    <location>
        <begin position="156"/>
        <end position="159"/>
    </location>
</feature>
<feature type="strand" evidence="5">
    <location>
        <begin position="162"/>
        <end position="168"/>
    </location>
</feature>
<feature type="helix" evidence="5">
    <location>
        <begin position="175"/>
        <end position="196"/>
    </location>
</feature>
<feature type="strand" evidence="5">
    <location>
        <begin position="204"/>
        <end position="206"/>
    </location>
</feature>
<feature type="strand" evidence="5">
    <location>
        <begin position="213"/>
        <end position="215"/>
    </location>
</feature>
<feature type="helix" evidence="5">
    <location>
        <begin position="216"/>
        <end position="229"/>
    </location>
</feature>
<feature type="turn" evidence="5">
    <location>
        <begin position="233"/>
        <end position="236"/>
    </location>
</feature>
<feature type="strand" evidence="5">
    <location>
        <begin position="238"/>
        <end position="242"/>
    </location>
</feature>
<feature type="turn" evidence="5">
    <location>
        <begin position="245"/>
        <end position="248"/>
    </location>
</feature>
<feature type="turn" evidence="5">
    <location>
        <begin position="251"/>
        <end position="253"/>
    </location>
</feature>
<feature type="strand" evidence="5">
    <location>
        <begin position="255"/>
        <end position="257"/>
    </location>
</feature>
<feature type="turn" evidence="5">
    <location>
        <begin position="259"/>
        <end position="262"/>
    </location>
</feature>
<feature type="helix" evidence="5">
    <location>
        <begin position="268"/>
        <end position="281"/>
    </location>
</feature>
<feature type="strand" evidence="5">
    <location>
        <begin position="284"/>
        <end position="289"/>
    </location>
</feature>
<feature type="helix" evidence="5">
    <location>
        <begin position="296"/>
        <end position="306"/>
    </location>
</feature>
<feature type="turn" evidence="5">
    <location>
        <begin position="307"/>
        <end position="309"/>
    </location>
</feature>
<feature type="strand" evidence="5">
    <location>
        <begin position="310"/>
        <end position="315"/>
    </location>
</feature>
<feature type="turn" evidence="5">
    <location>
        <begin position="316"/>
        <end position="320"/>
    </location>
</feature>
<feature type="helix" evidence="5">
    <location>
        <begin position="322"/>
        <end position="331"/>
    </location>
</feature>
<feature type="strand" evidence="5">
    <location>
        <begin position="337"/>
        <end position="339"/>
    </location>
</feature>
<feature type="helix" evidence="5">
    <location>
        <begin position="341"/>
        <end position="344"/>
    </location>
</feature>
<feature type="helix" evidence="5">
    <location>
        <begin position="347"/>
        <end position="359"/>
    </location>
</feature>
<feature type="strand" evidence="5">
    <location>
        <begin position="364"/>
        <end position="367"/>
    </location>
</feature>
<feature type="helix" evidence="5">
    <location>
        <begin position="377"/>
        <end position="384"/>
    </location>
</feature>
<feature type="strand" evidence="5">
    <location>
        <begin position="388"/>
        <end position="391"/>
    </location>
</feature>
<feature type="strand" evidence="5">
    <location>
        <begin position="395"/>
        <end position="397"/>
    </location>
</feature>
<feature type="helix" evidence="5">
    <location>
        <begin position="398"/>
        <end position="414"/>
    </location>
</feature>
<feature type="helix" evidence="5">
    <location>
        <begin position="415"/>
        <end position="417"/>
    </location>
</feature>
<feature type="helix" evidence="5">
    <location>
        <begin position="422"/>
        <end position="425"/>
    </location>
</feature>